<accession>Q10097</accession>
<gene>
    <name type="ORF">SPAC11D3.18c</name>
</gene>
<organism>
    <name type="scientific">Schizosaccharomyces pombe (strain 972 / ATCC 24843)</name>
    <name type="common">Fission yeast</name>
    <dbReference type="NCBI Taxonomy" id="284812"/>
    <lineage>
        <taxon>Eukaryota</taxon>
        <taxon>Fungi</taxon>
        <taxon>Dikarya</taxon>
        <taxon>Ascomycota</taxon>
        <taxon>Taphrinomycotina</taxon>
        <taxon>Schizosaccharomycetes</taxon>
        <taxon>Schizosaccharomycetales</taxon>
        <taxon>Schizosaccharomycetaceae</taxon>
        <taxon>Schizosaccharomyces</taxon>
    </lineage>
</organism>
<keyword id="KW-0472">Membrane</keyword>
<keyword id="KW-1185">Reference proteome</keyword>
<keyword id="KW-0812">Transmembrane</keyword>
<keyword id="KW-1133">Transmembrane helix</keyword>
<keyword id="KW-0813">Transport</keyword>
<comment type="subcellular location">
    <subcellularLocation>
        <location evidence="2">Membrane</location>
        <topology evidence="2">Multi-pass membrane protein</topology>
    </subcellularLocation>
</comment>
<comment type="similarity">
    <text evidence="2">Belongs to the major facilitator superfamily. Allantoate permease family.</text>
</comment>
<dbReference type="EMBL" id="CU329670">
    <property type="protein sequence ID" value="CAA92319.1"/>
    <property type="molecule type" value="Genomic_DNA"/>
</dbReference>
<dbReference type="PIR" id="T37527">
    <property type="entry name" value="T37527"/>
</dbReference>
<dbReference type="RefSeq" id="NP_592813.1">
    <property type="nucleotide sequence ID" value="NM_001018213.2"/>
</dbReference>
<dbReference type="SMR" id="Q10097"/>
<dbReference type="BioGRID" id="279443">
    <property type="interactions" value="1"/>
</dbReference>
<dbReference type="FunCoup" id="Q10097">
    <property type="interactions" value="96"/>
</dbReference>
<dbReference type="STRING" id="284812.Q10097"/>
<dbReference type="iPTMnet" id="Q10097"/>
<dbReference type="PaxDb" id="4896-SPAC11D3.18c.1"/>
<dbReference type="EnsemblFungi" id="SPAC11D3.18c.1">
    <property type="protein sequence ID" value="SPAC11D3.18c.1:pep"/>
    <property type="gene ID" value="SPAC11D3.18c"/>
</dbReference>
<dbReference type="PomBase" id="SPAC11D3.18c"/>
<dbReference type="VEuPathDB" id="FungiDB:SPAC11D3.18c"/>
<dbReference type="eggNOG" id="KOG2533">
    <property type="taxonomic scope" value="Eukaryota"/>
</dbReference>
<dbReference type="HOGENOM" id="CLU_001265_0_1_1"/>
<dbReference type="InParanoid" id="Q10097"/>
<dbReference type="OMA" id="CADMVLY"/>
<dbReference type="PhylomeDB" id="Q10097"/>
<dbReference type="PRO" id="PR:Q10097"/>
<dbReference type="Proteomes" id="UP000002485">
    <property type="component" value="Chromosome I"/>
</dbReference>
<dbReference type="GO" id="GO:0005783">
    <property type="term" value="C:endoplasmic reticulum"/>
    <property type="evidence" value="ECO:0007005"/>
    <property type="project" value="PomBase"/>
</dbReference>
<dbReference type="GO" id="GO:0016020">
    <property type="term" value="C:membrane"/>
    <property type="evidence" value="ECO:0000318"/>
    <property type="project" value="GO_Central"/>
</dbReference>
<dbReference type="GO" id="GO:0005886">
    <property type="term" value="C:plasma membrane"/>
    <property type="evidence" value="ECO:0000266"/>
    <property type="project" value="PomBase"/>
</dbReference>
<dbReference type="GO" id="GO:0046943">
    <property type="term" value="F:carboxylic acid transmembrane transporter activity"/>
    <property type="evidence" value="ECO:0000266"/>
    <property type="project" value="PomBase"/>
</dbReference>
<dbReference type="GO" id="GO:0022857">
    <property type="term" value="F:transmembrane transporter activity"/>
    <property type="evidence" value="ECO:0000318"/>
    <property type="project" value="GO_Central"/>
</dbReference>
<dbReference type="GO" id="GO:1905039">
    <property type="term" value="P:carboxylic acid transmembrane transport"/>
    <property type="evidence" value="ECO:0000266"/>
    <property type="project" value="PomBase"/>
</dbReference>
<dbReference type="CDD" id="cd17327">
    <property type="entry name" value="MFS_FEN2_like"/>
    <property type="match status" value="1"/>
</dbReference>
<dbReference type="FunFam" id="1.20.1250.20:FF:000068">
    <property type="entry name" value="MFS general substrate transporter"/>
    <property type="match status" value="1"/>
</dbReference>
<dbReference type="FunFam" id="1.20.1250.20:FF:000018">
    <property type="entry name" value="MFS transporter permease"/>
    <property type="match status" value="1"/>
</dbReference>
<dbReference type="Gene3D" id="1.20.1250.20">
    <property type="entry name" value="MFS general substrate transporter like domains"/>
    <property type="match status" value="2"/>
</dbReference>
<dbReference type="InterPro" id="IPR011701">
    <property type="entry name" value="MFS"/>
</dbReference>
<dbReference type="InterPro" id="IPR020846">
    <property type="entry name" value="MFS_dom"/>
</dbReference>
<dbReference type="InterPro" id="IPR036259">
    <property type="entry name" value="MFS_trans_sf"/>
</dbReference>
<dbReference type="PANTHER" id="PTHR43791:SF24">
    <property type="entry name" value="NICOTINIC ACID PLASMA MEMBRANE TRANSPORTER"/>
    <property type="match status" value="1"/>
</dbReference>
<dbReference type="PANTHER" id="PTHR43791">
    <property type="entry name" value="PERMEASE-RELATED"/>
    <property type="match status" value="1"/>
</dbReference>
<dbReference type="Pfam" id="PF07690">
    <property type="entry name" value="MFS_1"/>
    <property type="match status" value="1"/>
</dbReference>
<dbReference type="SUPFAM" id="SSF103473">
    <property type="entry name" value="MFS general substrate transporter"/>
    <property type="match status" value="1"/>
</dbReference>
<dbReference type="PROSITE" id="PS50850">
    <property type="entry name" value="MFS"/>
    <property type="match status" value="1"/>
</dbReference>
<name>YAOI_SCHPO</name>
<reference key="1">
    <citation type="journal article" date="2002" name="Nature">
        <title>The genome sequence of Schizosaccharomyces pombe.</title>
        <authorList>
            <person name="Wood V."/>
            <person name="Gwilliam R."/>
            <person name="Rajandream M.A."/>
            <person name="Lyne M.H."/>
            <person name="Lyne R."/>
            <person name="Stewart A."/>
            <person name="Sgouros J.G."/>
            <person name="Peat N."/>
            <person name="Hayles J."/>
            <person name="Baker S.G."/>
            <person name="Basham D."/>
            <person name="Bowman S."/>
            <person name="Brooks K."/>
            <person name="Brown D."/>
            <person name="Brown S."/>
            <person name="Chillingworth T."/>
            <person name="Churcher C.M."/>
            <person name="Collins M."/>
            <person name="Connor R."/>
            <person name="Cronin A."/>
            <person name="Davis P."/>
            <person name="Feltwell T."/>
            <person name="Fraser A."/>
            <person name="Gentles S."/>
            <person name="Goble A."/>
            <person name="Hamlin N."/>
            <person name="Harris D.E."/>
            <person name="Hidalgo J."/>
            <person name="Hodgson G."/>
            <person name="Holroyd S."/>
            <person name="Hornsby T."/>
            <person name="Howarth S."/>
            <person name="Huckle E.J."/>
            <person name="Hunt S."/>
            <person name="Jagels K."/>
            <person name="James K.D."/>
            <person name="Jones L."/>
            <person name="Jones M."/>
            <person name="Leather S."/>
            <person name="McDonald S."/>
            <person name="McLean J."/>
            <person name="Mooney P."/>
            <person name="Moule S."/>
            <person name="Mungall K.L."/>
            <person name="Murphy L.D."/>
            <person name="Niblett D."/>
            <person name="Odell C."/>
            <person name="Oliver K."/>
            <person name="O'Neil S."/>
            <person name="Pearson D."/>
            <person name="Quail M.A."/>
            <person name="Rabbinowitsch E."/>
            <person name="Rutherford K.M."/>
            <person name="Rutter S."/>
            <person name="Saunders D."/>
            <person name="Seeger K."/>
            <person name="Sharp S."/>
            <person name="Skelton J."/>
            <person name="Simmonds M.N."/>
            <person name="Squares R."/>
            <person name="Squares S."/>
            <person name="Stevens K."/>
            <person name="Taylor K."/>
            <person name="Taylor R.G."/>
            <person name="Tivey A."/>
            <person name="Walsh S.V."/>
            <person name="Warren T."/>
            <person name="Whitehead S."/>
            <person name="Woodward J.R."/>
            <person name="Volckaert G."/>
            <person name="Aert R."/>
            <person name="Robben J."/>
            <person name="Grymonprez B."/>
            <person name="Weltjens I."/>
            <person name="Vanstreels E."/>
            <person name="Rieger M."/>
            <person name="Schaefer M."/>
            <person name="Mueller-Auer S."/>
            <person name="Gabel C."/>
            <person name="Fuchs M."/>
            <person name="Duesterhoeft A."/>
            <person name="Fritzc C."/>
            <person name="Holzer E."/>
            <person name="Moestl D."/>
            <person name="Hilbert H."/>
            <person name="Borzym K."/>
            <person name="Langer I."/>
            <person name="Beck A."/>
            <person name="Lehrach H."/>
            <person name="Reinhardt R."/>
            <person name="Pohl T.M."/>
            <person name="Eger P."/>
            <person name="Zimmermann W."/>
            <person name="Wedler H."/>
            <person name="Wambutt R."/>
            <person name="Purnelle B."/>
            <person name="Goffeau A."/>
            <person name="Cadieu E."/>
            <person name="Dreano S."/>
            <person name="Gloux S."/>
            <person name="Lelaure V."/>
            <person name="Mottier S."/>
            <person name="Galibert F."/>
            <person name="Aves S.J."/>
            <person name="Xiang Z."/>
            <person name="Hunt C."/>
            <person name="Moore K."/>
            <person name="Hurst S.M."/>
            <person name="Lucas M."/>
            <person name="Rochet M."/>
            <person name="Gaillardin C."/>
            <person name="Tallada V.A."/>
            <person name="Garzon A."/>
            <person name="Thode G."/>
            <person name="Daga R.R."/>
            <person name="Cruzado L."/>
            <person name="Jimenez J."/>
            <person name="Sanchez M."/>
            <person name="del Rey F."/>
            <person name="Benito J."/>
            <person name="Dominguez A."/>
            <person name="Revuelta J.L."/>
            <person name="Moreno S."/>
            <person name="Armstrong J."/>
            <person name="Forsburg S.L."/>
            <person name="Cerutti L."/>
            <person name="Lowe T."/>
            <person name="McCombie W.R."/>
            <person name="Paulsen I."/>
            <person name="Potashkin J."/>
            <person name="Shpakovski G.V."/>
            <person name="Ussery D."/>
            <person name="Barrell B.G."/>
            <person name="Nurse P."/>
        </authorList>
    </citation>
    <scope>NUCLEOTIDE SEQUENCE [LARGE SCALE GENOMIC DNA]</scope>
    <source>
        <strain>972 / ATCC 24843</strain>
    </source>
</reference>
<protein>
    <recommendedName>
        <fullName>Uncharacterized transporter C11D3.18C</fullName>
    </recommendedName>
</protein>
<proteinExistence type="inferred from homology"/>
<feature type="chain" id="PRO_0000121374" description="Uncharacterized transporter C11D3.18C">
    <location>
        <begin position="1"/>
        <end position="498"/>
    </location>
</feature>
<feature type="transmembrane region" description="Helical" evidence="1">
    <location>
        <begin position="54"/>
        <end position="74"/>
    </location>
</feature>
<feature type="transmembrane region" description="Helical" evidence="1">
    <location>
        <begin position="100"/>
        <end position="120"/>
    </location>
</feature>
<feature type="transmembrane region" description="Helical" evidence="1">
    <location>
        <begin position="128"/>
        <end position="148"/>
    </location>
</feature>
<feature type="transmembrane region" description="Helical" evidence="1">
    <location>
        <begin position="150"/>
        <end position="170"/>
    </location>
</feature>
<feature type="transmembrane region" description="Helical" evidence="1">
    <location>
        <begin position="188"/>
        <end position="208"/>
    </location>
</feature>
<feature type="transmembrane region" description="Helical" evidence="1">
    <location>
        <begin position="221"/>
        <end position="241"/>
    </location>
</feature>
<feature type="transmembrane region" description="Helical" evidence="1">
    <location>
        <begin position="302"/>
        <end position="322"/>
    </location>
</feature>
<feature type="transmembrane region" description="Helical" evidence="1">
    <location>
        <begin position="326"/>
        <end position="346"/>
    </location>
</feature>
<feature type="transmembrane region" description="Helical" evidence="1">
    <location>
        <begin position="353"/>
        <end position="373"/>
    </location>
</feature>
<feature type="transmembrane region" description="Helical" evidence="1">
    <location>
        <begin position="381"/>
        <end position="401"/>
    </location>
</feature>
<feature type="transmembrane region" description="Helical" evidence="1">
    <location>
        <begin position="446"/>
        <end position="466"/>
    </location>
</feature>
<evidence type="ECO:0000255" key="1"/>
<evidence type="ECO:0000305" key="2"/>
<sequence>MSDQSEYKISKDDEHSIYASEINKEKLQNTASPDVDYGDTASLKIDPKVEKKLLLKMDLVISPIIGFLYLMAFLDRSNIGNAAVAGMTEALSLYGERLNVAVSIFYVLYILVETPSVVLVKRIKASRMLAFISFAWSMTVLFSGFMSSYGGLIATRLILGLLEGCLFPALNLYLTTHYTRKEQCQRLSYLFASAGLAGAFGGLFAYALEQVHAGNKEGWQWIYIVEGLVSFIGVPLCLFALPDKMENAWFLTREEREVAIIRRDINARYHGEQHFEWSEVRKAFKDPKVYVSATSQFCADMVLYGFSSFLPVIIKGLGFVGLQTNYMTIPVYIAGVISFLFVAWLSDRTQLRAVYLISASTVVAVGYIIMLASDSNAAKYTATYIIAIGCYIGPGLNLGWLNNNVAGHYKRATAIGIQQTLANSSGIVAGQIYRSKNAPKYILGNAFTLGCVIVGGLAYVVMFFSLRYVNKKRDERCARGEFDPSAIGDFADDFRYYL</sequence>